<protein>
    <recommendedName>
        <fullName evidence="1">Ribosome maturation factor RimM</fullName>
    </recommendedName>
</protein>
<organism>
    <name type="scientific">Pseudoalteromonas translucida (strain TAC 125)</name>
    <dbReference type="NCBI Taxonomy" id="326442"/>
    <lineage>
        <taxon>Bacteria</taxon>
        <taxon>Pseudomonadati</taxon>
        <taxon>Pseudomonadota</taxon>
        <taxon>Gammaproteobacteria</taxon>
        <taxon>Alteromonadales</taxon>
        <taxon>Pseudoalteromonadaceae</taxon>
        <taxon>Pseudoalteromonas</taxon>
    </lineage>
</organism>
<keyword id="KW-0143">Chaperone</keyword>
<keyword id="KW-0963">Cytoplasm</keyword>
<keyword id="KW-1185">Reference proteome</keyword>
<keyword id="KW-0690">Ribosome biogenesis</keyword>
<keyword id="KW-0698">rRNA processing</keyword>
<name>RIMM_PSET1</name>
<evidence type="ECO:0000255" key="1">
    <source>
        <dbReference type="HAMAP-Rule" id="MF_00014"/>
    </source>
</evidence>
<accession>Q3IEC8</accession>
<sequence>MSQENTSSIIVVGKLGAPYGIKGWLKVHSFTDDPAGIFDFSPWLIGQQGKWQTLEVVDWRRHNKGFIAKFAQVNDRDEAVAYTHAEISMDSAQLPELPQGEFYWRDLIGMSVVTDKGYDLGIVDDLMETGSNDVLVVKANSKDAFGQAERLIPFLTDTVIIEVKHDAREITVDWDPGF</sequence>
<feature type="chain" id="PRO_0000244147" description="Ribosome maturation factor RimM">
    <location>
        <begin position="1"/>
        <end position="178"/>
    </location>
</feature>
<feature type="domain" description="PRC barrel" evidence="1">
    <location>
        <begin position="99"/>
        <end position="178"/>
    </location>
</feature>
<reference key="1">
    <citation type="journal article" date="2005" name="Genome Res.">
        <title>Coping with cold: the genome of the versatile marine Antarctica bacterium Pseudoalteromonas haloplanktis TAC125.</title>
        <authorList>
            <person name="Medigue C."/>
            <person name="Krin E."/>
            <person name="Pascal G."/>
            <person name="Barbe V."/>
            <person name="Bernsel A."/>
            <person name="Bertin P.N."/>
            <person name="Cheung F."/>
            <person name="Cruveiller S."/>
            <person name="D'Amico S."/>
            <person name="Duilio A."/>
            <person name="Fang G."/>
            <person name="Feller G."/>
            <person name="Ho C."/>
            <person name="Mangenot S."/>
            <person name="Marino G."/>
            <person name="Nilsson J."/>
            <person name="Parrilli E."/>
            <person name="Rocha E.P.C."/>
            <person name="Rouy Z."/>
            <person name="Sekowska A."/>
            <person name="Tutino M.L."/>
            <person name="Vallenet D."/>
            <person name="von Heijne G."/>
            <person name="Danchin A."/>
        </authorList>
    </citation>
    <scope>NUCLEOTIDE SEQUENCE [LARGE SCALE GENOMIC DNA]</scope>
    <source>
        <strain>TAC 125</strain>
    </source>
</reference>
<comment type="function">
    <text evidence="1">An accessory protein needed during the final step in the assembly of 30S ribosomal subunit, possibly for assembly of the head region. Essential for efficient processing of 16S rRNA. May be needed both before and after RbfA during the maturation of 16S rRNA. It has affinity for free ribosomal 30S subunits but not for 70S ribosomes.</text>
</comment>
<comment type="subunit">
    <text evidence="1">Binds ribosomal protein uS19.</text>
</comment>
<comment type="subcellular location">
    <subcellularLocation>
        <location evidence="1">Cytoplasm</location>
    </subcellularLocation>
</comment>
<comment type="domain">
    <text evidence="1">The PRC barrel domain binds ribosomal protein uS19.</text>
</comment>
<comment type="similarity">
    <text evidence="1">Belongs to the RimM family.</text>
</comment>
<dbReference type="EMBL" id="CR954246">
    <property type="protein sequence ID" value="CAI86023.1"/>
    <property type="molecule type" value="Genomic_DNA"/>
</dbReference>
<dbReference type="SMR" id="Q3IEC8"/>
<dbReference type="STRING" id="326442.PSHAa0945"/>
<dbReference type="KEGG" id="pha:PSHAa0945"/>
<dbReference type="PATRIC" id="fig|326442.8.peg.904"/>
<dbReference type="eggNOG" id="COG0806">
    <property type="taxonomic scope" value="Bacteria"/>
</dbReference>
<dbReference type="HOGENOM" id="CLU_077636_1_0_6"/>
<dbReference type="BioCyc" id="PHAL326442:PSHA_RS04605-MONOMER"/>
<dbReference type="Proteomes" id="UP000006843">
    <property type="component" value="Chromosome I"/>
</dbReference>
<dbReference type="GO" id="GO:0005737">
    <property type="term" value="C:cytoplasm"/>
    <property type="evidence" value="ECO:0007669"/>
    <property type="project" value="UniProtKB-SubCell"/>
</dbReference>
<dbReference type="GO" id="GO:0005840">
    <property type="term" value="C:ribosome"/>
    <property type="evidence" value="ECO:0007669"/>
    <property type="project" value="InterPro"/>
</dbReference>
<dbReference type="GO" id="GO:0043022">
    <property type="term" value="F:ribosome binding"/>
    <property type="evidence" value="ECO:0007669"/>
    <property type="project" value="InterPro"/>
</dbReference>
<dbReference type="GO" id="GO:0042274">
    <property type="term" value="P:ribosomal small subunit biogenesis"/>
    <property type="evidence" value="ECO:0007669"/>
    <property type="project" value="UniProtKB-UniRule"/>
</dbReference>
<dbReference type="GO" id="GO:0006364">
    <property type="term" value="P:rRNA processing"/>
    <property type="evidence" value="ECO:0007669"/>
    <property type="project" value="UniProtKB-UniRule"/>
</dbReference>
<dbReference type="Gene3D" id="2.30.30.240">
    <property type="entry name" value="PRC-barrel domain"/>
    <property type="match status" value="1"/>
</dbReference>
<dbReference type="Gene3D" id="2.40.30.60">
    <property type="entry name" value="RimM"/>
    <property type="match status" value="1"/>
</dbReference>
<dbReference type="HAMAP" id="MF_00014">
    <property type="entry name" value="Ribosome_mat_RimM"/>
    <property type="match status" value="1"/>
</dbReference>
<dbReference type="InterPro" id="IPR011033">
    <property type="entry name" value="PRC_barrel-like_sf"/>
</dbReference>
<dbReference type="InterPro" id="IPR056792">
    <property type="entry name" value="PRC_RimM"/>
</dbReference>
<dbReference type="InterPro" id="IPR011961">
    <property type="entry name" value="RimM"/>
</dbReference>
<dbReference type="InterPro" id="IPR002676">
    <property type="entry name" value="RimM_N"/>
</dbReference>
<dbReference type="InterPro" id="IPR036976">
    <property type="entry name" value="RimM_N_sf"/>
</dbReference>
<dbReference type="InterPro" id="IPR009000">
    <property type="entry name" value="Transl_B-barrel_sf"/>
</dbReference>
<dbReference type="NCBIfam" id="TIGR02273">
    <property type="entry name" value="16S_RimM"/>
    <property type="match status" value="1"/>
</dbReference>
<dbReference type="PANTHER" id="PTHR33692">
    <property type="entry name" value="RIBOSOME MATURATION FACTOR RIMM"/>
    <property type="match status" value="1"/>
</dbReference>
<dbReference type="PANTHER" id="PTHR33692:SF1">
    <property type="entry name" value="RIBOSOME MATURATION FACTOR RIMM"/>
    <property type="match status" value="1"/>
</dbReference>
<dbReference type="Pfam" id="PF24986">
    <property type="entry name" value="PRC_RimM"/>
    <property type="match status" value="1"/>
</dbReference>
<dbReference type="Pfam" id="PF01782">
    <property type="entry name" value="RimM"/>
    <property type="match status" value="1"/>
</dbReference>
<dbReference type="SUPFAM" id="SSF50346">
    <property type="entry name" value="PRC-barrel domain"/>
    <property type="match status" value="1"/>
</dbReference>
<dbReference type="SUPFAM" id="SSF50447">
    <property type="entry name" value="Translation proteins"/>
    <property type="match status" value="1"/>
</dbReference>
<gene>
    <name evidence="1" type="primary">rimM</name>
    <name type="ordered locus">PSHAa0945</name>
</gene>
<proteinExistence type="inferred from homology"/>